<organism>
    <name type="scientific">Pyrobaculum islandicum (strain DSM 4184 / JCM 9189 / GEO3)</name>
    <dbReference type="NCBI Taxonomy" id="384616"/>
    <lineage>
        <taxon>Archaea</taxon>
        <taxon>Thermoproteota</taxon>
        <taxon>Thermoprotei</taxon>
        <taxon>Thermoproteales</taxon>
        <taxon>Thermoproteaceae</taxon>
        <taxon>Pyrobaculum</taxon>
    </lineage>
</organism>
<dbReference type="EC" id="3.6.1.73" evidence="1"/>
<dbReference type="EMBL" id="CP000504">
    <property type="protein sequence ID" value="ABL88552.1"/>
    <property type="molecule type" value="Genomic_DNA"/>
</dbReference>
<dbReference type="RefSeq" id="WP_011763127.1">
    <property type="nucleotide sequence ID" value="NC_008701.1"/>
</dbReference>
<dbReference type="SMR" id="A1RUC0"/>
<dbReference type="STRING" id="384616.Pisl_1392"/>
<dbReference type="GeneID" id="4618216"/>
<dbReference type="KEGG" id="pis:Pisl_1392"/>
<dbReference type="eggNOG" id="arCOG01221">
    <property type="taxonomic scope" value="Archaea"/>
</dbReference>
<dbReference type="HOGENOM" id="CLU_087417_0_0_2"/>
<dbReference type="OrthoDB" id="52857at2157"/>
<dbReference type="Proteomes" id="UP000002595">
    <property type="component" value="Chromosome"/>
</dbReference>
<dbReference type="GO" id="GO:0103023">
    <property type="term" value="F:ITPase activity"/>
    <property type="evidence" value="ECO:0007669"/>
    <property type="project" value="UniProtKB-EC"/>
</dbReference>
<dbReference type="GO" id="GO:0046872">
    <property type="term" value="F:metal ion binding"/>
    <property type="evidence" value="ECO:0007669"/>
    <property type="project" value="UniProtKB-KW"/>
</dbReference>
<dbReference type="GO" id="GO:0000166">
    <property type="term" value="F:nucleotide binding"/>
    <property type="evidence" value="ECO:0007669"/>
    <property type="project" value="UniProtKB-KW"/>
</dbReference>
<dbReference type="GO" id="GO:0017111">
    <property type="term" value="F:ribonucleoside triphosphate phosphatase activity"/>
    <property type="evidence" value="ECO:0000250"/>
    <property type="project" value="UniProtKB"/>
</dbReference>
<dbReference type="GO" id="GO:0009117">
    <property type="term" value="P:nucleotide metabolic process"/>
    <property type="evidence" value="ECO:0007669"/>
    <property type="project" value="UniProtKB-KW"/>
</dbReference>
<dbReference type="GO" id="GO:0006772">
    <property type="term" value="P:thiamine metabolic process"/>
    <property type="evidence" value="ECO:0007669"/>
    <property type="project" value="TreeGrafter"/>
</dbReference>
<dbReference type="FunFam" id="3.90.950.10:FF:000002">
    <property type="entry name" value="Inosine/xanthosine triphosphatase"/>
    <property type="match status" value="1"/>
</dbReference>
<dbReference type="Gene3D" id="3.90.950.10">
    <property type="match status" value="1"/>
</dbReference>
<dbReference type="HAMAP" id="MF_00648">
    <property type="entry name" value="Non_canon_purine_NTPase_YjjX"/>
    <property type="match status" value="1"/>
</dbReference>
<dbReference type="InterPro" id="IPR029001">
    <property type="entry name" value="ITPase-like_fam"/>
</dbReference>
<dbReference type="InterPro" id="IPR002786">
    <property type="entry name" value="Non_canon_purine_NTPase"/>
</dbReference>
<dbReference type="InterPro" id="IPR026533">
    <property type="entry name" value="NTPase/PRRC1"/>
</dbReference>
<dbReference type="InterPro" id="IPR050299">
    <property type="entry name" value="YjjX_NTPase"/>
</dbReference>
<dbReference type="NCBIfam" id="TIGR00258">
    <property type="entry name" value="inosine/xanthosine triphosphatase"/>
    <property type="match status" value="1"/>
</dbReference>
<dbReference type="PANTHER" id="PTHR34699">
    <property type="match status" value="1"/>
</dbReference>
<dbReference type="PANTHER" id="PTHR34699:SF2">
    <property type="entry name" value="NON-CANONICAL PURINE NTP PHOSPHATASE_PRRC1 DOMAIN-CONTAINING PROTEIN"/>
    <property type="match status" value="1"/>
</dbReference>
<dbReference type="Pfam" id="PF01931">
    <property type="entry name" value="NTPase_I-T"/>
    <property type="match status" value="1"/>
</dbReference>
<dbReference type="SUPFAM" id="SSF52972">
    <property type="entry name" value="ITPase-like"/>
    <property type="match status" value="1"/>
</dbReference>
<sequence>MIVAVASRNPNKLRAVQAAYKLFGMRAQVVPVEKPVSLPPQPIGVETVVAGAIERARAALSVVQNAEHGVGIEAGVLQAGGRYLDVTVAAIADRNGVVTIGFGPAFQVPDIFLNDVLRGVELGVLAERYFGRVAIGYKEGIIGVLTKGVVSRFDLNMAAVVMALVPRLSTNAPLYRF</sequence>
<reference key="1">
    <citation type="submission" date="2006-12" db="EMBL/GenBank/DDBJ databases">
        <title>Complete sequence of Pyrobaculum islandicum DSM 4184.</title>
        <authorList>
            <person name="Copeland A."/>
            <person name="Lucas S."/>
            <person name="Lapidus A."/>
            <person name="Barry K."/>
            <person name="Detter J.C."/>
            <person name="Glavina del Rio T."/>
            <person name="Dalin E."/>
            <person name="Tice H."/>
            <person name="Pitluck S."/>
            <person name="Meincke L."/>
            <person name="Brettin T."/>
            <person name="Bruce D."/>
            <person name="Han C."/>
            <person name="Tapia R."/>
            <person name="Gilna P."/>
            <person name="Schmutz J."/>
            <person name="Larimer F."/>
            <person name="Land M."/>
            <person name="Hauser L."/>
            <person name="Kyrpides N."/>
            <person name="Mikhailova N."/>
            <person name="Cozen A.E."/>
            <person name="Fitz-Gibbon S.T."/>
            <person name="House C.H."/>
            <person name="Saltikov C."/>
            <person name="Lowe T."/>
            <person name="Richardson P."/>
        </authorList>
    </citation>
    <scope>NUCLEOTIDE SEQUENCE [LARGE SCALE GENOMIC DNA]</scope>
    <source>
        <strain>DSM 4184 / JCM 9189 / GEO3</strain>
    </source>
</reference>
<evidence type="ECO:0000255" key="1">
    <source>
        <dbReference type="HAMAP-Rule" id="MF_00648"/>
    </source>
</evidence>
<accession>A1RUC0</accession>
<protein>
    <recommendedName>
        <fullName evidence="1">Probable inosine/xanthosine triphosphatase</fullName>
        <shortName evidence="1">ITPase/XTPase</shortName>
        <ecNumber evidence="1">3.6.1.73</ecNumber>
    </recommendedName>
    <alternativeName>
        <fullName evidence="1">Non-canonical purine NTP phosphatase</fullName>
    </alternativeName>
    <alternativeName>
        <fullName evidence="1">Non-standard purine NTP phosphatase</fullName>
    </alternativeName>
    <alternativeName>
        <fullName evidence="1">Nucleoside-triphosphate phosphatase</fullName>
        <shortName evidence="1">NTPase</shortName>
    </alternativeName>
</protein>
<feature type="chain" id="PRO_1000056956" description="Probable inosine/xanthosine triphosphatase">
    <location>
        <begin position="1"/>
        <end position="177"/>
    </location>
</feature>
<comment type="function">
    <text evidence="1">Phosphatase that hydrolyzes non-canonical purine nucleotides such as XTP and ITP to their respective diphosphate derivatives. Probably excludes non-canonical purines from DNA/RNA precursor pool, thus preventing their incorporation into DNA/RNA and avoiding chromosomal lesions.</text>
</comment>
<comment type="catalytic activity">
    <reaction evidence="1">
        <text>XTP + H2O = XDP + phosphate + H(+)</text>
        <dbReference type="Rhea" id="RHEA:28406"/>
        <dbReference type="ChEBI" id="CHEBI:15377"/>
        <dbReference type="ChEBI" id="CHEBI:15378"/>
        <dbReference type="ChEBI" id="CHEBI:43474"/>
        <dbReference type="ChEBI" id="CHEBI:59884"/>
        <dbReference type="ChEBI" id="CHEBI:61314"/>
        <dbReference type="EC" id="3.6.1.73"/>
    </reaction>
</comment>
<comment type="catalytic activity">
    <reaction evidence="1">
        <text>ITP + H2O = IDP + phosphate + H(+)</text>
        <dbReference type="Rhea" id="RHEA:28330"/>
        <dbReference type="ChEBI" id="CHEBI:15377"/>
        <dbReference type="ChEBI" id="CHEBI:15378"/>
        <dbReference type="ChEBI" id="CHEBI:43474"/>
        <dbReference type="ChEBI" id="CHEBI:58280"/>
        <dbReference type="ChEBI" id="CHEBI:61402"/>
        <dbReference type="EC" id="3.6.1.73"/>
    </reaction>
</comment>
<comment type="cofactor">
    <cofactor evidence="1">
        <name>Mg(2+)</name>
        <dbReference type="ChEBI" id="CHEBI:18420"/>
    </cofactor>
    <cofactor evidence="1">
        <name>Mn(2+)</name>
        <dbReference type="ChEBI" id="CHEBI:29035"/>
    </cofactor>
    <text evidence="1">Binds 1 divalent metal cation per subunit; can use either Mg(2+) or Mn(2+).</text>
</comment>
<comment type="subunit">
    <text evidence="1">Homodimer.</text>
</comment>
<comment type="similarity">
    <text evidence="1">Belongs to the YjjX NTPase family.</text>
</comment>
<proteinExistence type="inferred from homology"/>
<name>NCPP_PYRIL</name>
<keyword id="KW-0378">Hydrolase</keyword>
<keyword id="KW-0460">Magnesium</keyword>
<keyword id="KW-0464">Manganese</keyword>
<keyword id="KW-0479">Metal-binding</keyword>
<keyword id="KW-0546">Nucleotide metabolism</keyword>
<keyword id="KW-0547">Nucleotide-binding</keyword>
<gene>
    <name type="ordered locus">Pisl_1392</name>
</gene>